<organism>
    <name type="scientific">Caldanaerobacter subterraneus subsp. tengcongensis (strain DSM 15242 / JCM 11007 / NBRC 100824 / MB4)</name>
    <name type="common">Thermoanaerobacter tengcongensis</name>
    <dbReference type="NCBI Taxonomy" id="273068"/>
    <lineage>
        <taxon>Bacteria</taxon>
        <taxon>Bacillati</taxon>
        <taxon>Bacillota</taxon>
        <taxon>Clostridia</taxon>
        <taxon>Thermoanaerobacterales</taxon>
        <taxon>Thermoanaerobacteraceae</taxon>
        <taxon>Caldanaerobacter</taxon>
    </lineage>
</organism>
<name>ISPG_CALS4</name>
<feature type="chain" id="PRO_0000190646" description="4-hydroxy-3-methylbut-2-en-1-yl diphosphate synthase (flavodoxin)">
    <location>
        <begin position="1"/>
        <end position="355"/>
    </location>
</feature>
<feature type="binding site" evidence="1">
    <location>
        <position position="266"/>
    </location>
    <ligand>
        <name>[4Fe-4S] cluster</name>
        <dbReference type="ChEBI" id="CHEBI:49883"/>
    </ligand>
</feature>
<feature type="binding site" evidence="1">
    <location>
        <position position="269"/>
    </location>
    <ligand>
        <name>[4Fe-4S] cluster</name>
        <dbReference type="ChEBI" id="CHEBI:49883"/>
    </ligand>
</feature>
<feature type="binding site" evidence="1">
    <location>
        <position position="301"/>
    </location>
    <ligand>
        <name>[4Fe-4S] cluster</name>
        <dbReference type="ChEBI" id="CHEBI:49883"/>
    </ligand>
</feature>
<feature type="binding site" evidence="1">
    <location>
        <position position="308"/>
    </location>
    <ligand>
        <name>[4Fe-4S] cluster</name>
        <dbReference type="ChEBI" id="CHEBI:49883"/>
    </ligand>
</feature>
<proteinExistence type="inferred from homology"/>
<dbReference type="EC" id="1.17.7.3" evidence="1"/>
<dbReference type="EMBL" id="AE008691">
    <property type="protein sequence ID" value="AAM24622.1"/>
    <property type="molecule type" value="Genomic_DNA"/>
</dbReference>
<dbReference type="SMR" id="Q8RA30"/>
<dbReference type="STRING" id="273068.TTE1400"/>
<dbReference type="KEGG" id="tte:TTE1400"/>
<dbReference type="eggNOG" id="COG0821">
    <property type="taxonomic scope" value="Bacteria"/>
</dbReference>
<dbReference type="HOGENOM" id="CLU_042258_0_0_9"/>
<dbReference type="UniPathway" id="UPA00056">
    <property type="reaction ID" value="UER00096"/>
</dbReference>
<dbReference type="Proteomes" id="UP000000555">
    <property type="component" value="Chromosome"/>
</dbReference>
<dbReference type="GO" id="GO:0051539">
    <property type="term" value="F:4 iron, 4 sulfur cluster binding"/>
    <property type="evidence" value="ECO:0007669"/>
    <property type="project" value="UniProtKB-UniRule"/>
</dbReference>
<dbReference type="GO" id="GO:0046429">
    <property type="term" value="F:4-hydroxy-3-methylbut-2-en-1-yl diphosphate synthase activity (ferredoxin)"/>
    <property type="evidence" value="ECO:0007669"/>
    <property type="project" value="UniProtKB-UniRule"/>
</dbReference>
<dbReference type="GO" id="GO:0141197">
    <property type="term" value="F:4-hydroxy-3-methylbut-2-enyl-diphosphate synthase activity (flavodoxin)"/>
    <property type="evidence" value="ECO:0007669"/>
    <property type="project" value="UniProtKB-EC"/>
</dbReference>
<dbReference type="GO" id="GO:0005506">
    <property type="term" value="F:iron ion binding"/>
    <property type="evidence" value="ECO:0007669"/>
    <property type="project" value="InterPro"/>
</dbReference>
<dbReference type="GO" id="GO:0019288">
    <property type="term" value="P:isopentenyl diphosphate biosynthetic process, methylerythritol 4-phosphate pathway"/>
    <property type="evidence" value="ECO:0007669"/>
    <property type="project" value="UniProtKB-UniRule"/>
</dbReference>
<dbReference type="GO" id="GO:0016114">
    <property type="term" value="P:terpenoid biosynthetic process"/>
    <property type="evidence" value="ECO:0007669"/>
    <property type="project" value="InterPro"/>
</dbReference>
<dbReference type="FunFam" id="3.20.20.20:FF:000001">
    <property type="entry name" value="4-hydroxy-3-methylbut-2-en-1-yl diphosphate synthase (flavodoxin)"/>
    <property type="match status" value="1"/>
</dbReference>
<dbReference type="Gene3D" id="3.20.20.20">
    <property type="entry name" value="Dihydropteroate synthase-like"/>
    <property type="match status" value="1"/>
</dbReference>
<dbReference type="Gene3D" id="3.30.413.10">
    <property type="entry name" value="Sulfite Reductase Hemoprotein, domain 1"/>
    <property type="match status" value="1"/>
</dbReference>
<dbReference type="HAMAP" id="MF_00159">
    <property type="entry name" value="IspG"/>
    <property type="match status" value="1"/>
</dbReference>
<dbReference type="InterPro" id="IPR011005">
    <property type="entry name" value="Dihydropteroate_synth-like_sf"/>
</dbReference>
<dbReference type="InterPro" id="IPR016425">
    <property type="entry name" value="IspG_bac"/>
</dbReference>
<dbReference type="InterPro" id="IPR004588">
    <property type="entry name" value="IspG_bac-typ"/>
</dbReference>
<dbReference type="InterPro" id="IPR045854">
    <property type="entry name" value="NO2/SO3_Rdtase_4Fe4S_sf"/>
</dbReference>
<dbReference type="NCBIfam" id="TIGR00612">
    <property type="entry name" value="ispG_gcpE"/>
    <property type="match status" value="1"/>
</dbReference>
<dbReference type="NCBIfam" id="NF001540">
    <property type="entry name" value="PRK00366.1"/>
    <property type="match status" value="1"/>
</dbReference>
<dbReference type="PANTHER" id="PTHR30454">
    <property type="entry name" value="4-HYDROXY-3-METHYLBUT-2-EN-1-YL DIPHOSPHATE SYNTHASE"/>
    <property type="match status" value="1"/>
</dbReference>
<dbReference type="PANTHER" id="PTHR30454:SF0">
    <property type="entry name" value="4-HYDROXY-3-METHYLBUT-2-EN-1-YL DIPHOSPHATE SYNTHASE (FERREDOXIN), CHLOROPLASTIC"/>
    <property type="match status" value="1"/>
</dbReference>
<dbReference type="Pfam" id="PF04551">
    <property type="entry name" value="GcpE"/>
    <property type="match status" value="1"/>
</dbReference>
<dbReference type="PIRSF" id="PIRSF004640">
    <property type="entry name" value="IspG"/>
    <property type="match status" value="1"/>
</dbReference>
<dbReference type="SUPFAM" id="SSF51717">
    <property type="entry name" value="Dihydropteroate synthetase-like"/>
    <property type="match status" value="1"/>
</dbReference>
<dbReference type="SUPFAM" id="SSF56014">
    <property type="entry name" value="Nitrite and sulphite reductase 4Fe-4S domain-like"/>
    <property type="match status" value="1"/>
</dbReference>
<sequence length="355" mass="39006">MIKMRKLTREIKIGNKKIGGNNPILVQSMTNTDTHDVEKTVEQIKRLEEEGCDIIRVAVPDEKAAYSIKEIKKHINIPLVADIHFDYRLAIKSIENGADKIRINPGNIGREENIKKVVEAAKERGIPIRIGVNAGSLEKEILNKYGGITPEAVVESALKSVRLLEKLGFYDIVISLKTSNVPLTIEAYKLASSKVDYPLHLGITEAGTLESGTIKSAIGIGTLLYMGIGDTIRVSLTGDPVHEVRVGRQILRALGLLKEGVEVISCPTCGRTKIDVIKLATEVERRTSHIKKPLKVAVMGCVVNGPGEAKEADIGIAGGDREGVIFKKGKIYKIVKEEHLLEELLKEIEKMVKEE</sequence>
<keyword id="KW-0004">4Fe-4S</keyword>
<keyword id="KW-0408">Iron</keyword>
<keyword id="KW-0411">Iron-sulfur</keyword>
<keyword id="KW-0414">Isoprene biosynthesis</keyword>
<keyword id="KW-0479">Metal-binding</keyword>
<keyword id="KW-0560">Oxidoreductase</keyword>
<keyword id="KW-1185">Reference proteome</keyword>
<evidence type="ECO:0000255" key="1">
    <source>
        <dbReference type="HAMAP-Rule" id="MF_00159"/>
    </source>
</evidence>
<reference key="1">
    <citation type="journal article" date="2002" name="Genome Res.">
        <title>A complete sequence of the T. tengcongensis genome.</title>
        <authorList>
            <person name="Bao Q."/>
            <person name="Tian Y."/>
            <person name="Li W."/>
            <person name="Xu Z."/>
            <person name="Xuan Z."/>
            <person name="Hu S."/>
            <person name="Dong W."/>
            <person name="Yang J."/>
            <person name="Chen Y."/>
            <person name="Xue Y."/>
            <person name="Xu Y."/>
            <person name="Lai X."/>
            <person name="Huang L."/>
            <person name="Dong X."/>
            <person name="Ma Y."/>
            <person name="Ling L."/>
            <person name="Tan H."/>
            <person name="Chen R."/>
            <person name="Wang J."/>
            <person name="Yu J."/>
            <person name="Yang H."/>
        </authorList>
    </citation>
    <scope>NUCLEOTIDE SEQUENCE [LARGE SCALE GENOMIC DNA]</scope>
    <source>
        <strain>DSM 15242 / JCM 11007 / NBRC 100824 / MB4</strain>
    </source>
</reference>
<comment type="function">
    <text evidence="1">Converts 2C-methyl-D-erythritol 2,4-cyclodiphosphate (ME-2,4cPP) into 1-hydroxy-2-methyl-2-(E)-butenyl 4-diphosphate.</text>
</comment>
<comment type="catalytic activity">
    <reaction evidence="1">
        <text>(2E)-4-hydroxy-3-methylbut-2-enyl diphosphate + oxidized [flavodoxin] + H2O + 2 H(+) = 2-C-methyl-D-erythritol 2,4-cyclic diphosphate + reduced [flavodoxin]</text>
        <dbReference type="Rhea" id="RHEA:43604"/>
        <dbReference type="Rhea" id="RHEA-COMP:10622"/>
        <dbReference type="Rhea" id="RHEA-COMP:10623"/>
        <dbReference type="ChEBI" id="CHEBI:15377"/>
        <dbReference type="ChEBI" id="CHEBI:15378"/>
        <dbReference type="ChEBI" id="CHEBI:57618"/>
        <dbReference type="ChEBI" id="CHEBI:58210"/>
        <dbReference type="ChEBI" id="CHEBI:58483"/>
        <dbReference type="ChEBI" id="CHEBI:128753"/>
        <dbReference type="EC" id="1.17.7.3"/>
    </reaction>
</comment>
<comment type="cofactor">
    <cofactor evidence="1">
        <name>[4Fe-4S] cluster</name>
        <dbReference type="ChEBI" id="CHEBI:49883"/>
    </cofactor>
    <text evidence="1">Binds 1 [4Fe-4S] cluster.</text>
</comment>
<comment type="pathway">
    <text evidence="1">Isoprenoid biosynthesis; isopentenyl diphosphate biosynthesis via DXP pathway; isopentenyl diphosphate from 1-deoxy-D-xylulose 5-phosphate: step 5/6.</text>
</comment>
<comment type="similarity">
    <text evidence="1">Belongs to the IspG family.</text>
</comment>
<gene>
    <name evidence="1" type="primary">ispG</name>
    <name type="synonym">gcpE</name>
    <name type="ordered locus">TTE1400</name>
</gene>
<accession>Q8RA30</accession>
<protein>
    <recommendedName>
        <fullName evidence="1">4-hydroxy-3-methylbut-2-en-1-yl diphosphate synthase (flavodoxin)</fullName>
        <ecNumber evidence="1">1.17.7.3</ecNumber>
    </recommendedName>
    <alternativeName>
        <fullName evidence="1">1-hydroxy-2-methyl-2-(E)-butenyl 4-diphosphate synthase</fullName>
    </alternativeName>
</protein>